<comment type="subcellular location">
    <subcellularLocation>
        <location evidence="1">Cell membrane</location>
        <topology evidence="1">Multi-pass membrane protein</topology>
    </subcellularLocation>
</comment>
<comment type="similarity">
    <text evidence="1">Belongs to the UPF0316 family.</text>
</comment>
<organism>
    <name type="scientific">Bacillus cereus (strain ATCC 10987 / NRS 248)</name>
    <dbReference type="NCBI Taxonomy" id="222523"/>
    <lineage>
        <taxon>Bacteria</taxon>
        <taxon>Bacillati</taxon>
        <taxon>Bacillota</taxon>
        <taxon>Bacilli</taxon>
        <taxon>Bacillales</taxon>
        <taxon>Bacillaceae</taxon>
        <taxon>Bacillus</taxon>
        <taxon>Bacillus cereus group</taxon>
    </lineage>
</organism>
<gene>
    <name type="ordered locus">BCE_3390</name>
</gene>
<sequence length="182" mass="20407">MLQALLIFVLQIIYVPILTIRTILLVKNQTRSAAGVGLLEGAIYIVSLGIVFQDLSNWMNIVAYVIGFSAGLLLGGYIENKLAIGYITYQVSLLDRCNELVDELRHSGFGVTVFEGEGINSIRYRLDIVAKRSREKELLEIINEIAPKAFMSSYEIRSFKGGYLTKAMKKRALMKKKDEHAS</sequence>
<reference key="1">
    <citation type="journal article" date="2004" name="Nucleic Acids Res.">
        <title>The genome sequence of Bacillus cereus ATCC 10987 reveals metabolic adaptations and a large plasmid related to Bacillus anthracis pXO1.</title>
        <authorList>
            <person name="Rasko D.A."/>
            <person name="Ravel J."/>
            <person name="Oekstad O.A."/>
            <person name="Helgason E."/>
            <person name="Cer R.Z."/>
            <person name="Jiang L."/>
            <person name="Shores K.A."/>
            <person name="Fouts D.E."/>
            <person name="Tourasse N.J."/>
            <person name="Angiuoli S.V."/>
            <person name="Kolonay J.F."/>
            <person name="Nelson W.C."/>
            <person name="Kolstoe A.-B."/>
            <person name="Fraser C.M."/>
            <person name="Read T.D."/>
        </authorList>
    </citation>
    <scope>NUCLEOTIDE SEQUENCE [LARGE SCALE GENOMIC DNA]</scope>
    <source>
        <strain>ATCC 10987 / NRS 248</strain>
    </source>
</reference>
<protein>
    <recommendedName>
        <fullName evidence="1">UPF0316 protein BCE_3390</fullName>
    </recommendedName>
</protein>
<keyword id="KW-1003">Cell membrane</keyword>
<keyword id="KW-0472">Membrane</keyword>
<keyword id="KW-0812">Transmembrane</keyword>
<keyword id="KW-1133">Transmembrane helix</keyword>
<feature type="chain" id="PRO_0000171933" description="UPF0316 protein BCE_3390">
    <location>
        <begin position="1"/>
        <end position="182"/>
    </location>
</feature>
<feature type="transmembrane region" description="Helical" evidence="1">
    <location>
        <begin position="6"/>
        <end position="26"/>
    </location>
</feature>
<feature type="transmembrane region" description="Helical" evidence="1">
    <location>
        <begin position="32"/>
        <end position="52"/>
    </location>
</feature>
<feature type="transmembrane region" description="Helical" evidence="1">
    <location>
        <begin position="58"/>
        <end position="78"/>
    </location>
</feature>
<accession>P61546</accession>
<evidence type="ECO:0000255" key="1">
    <source>
        <dbReference type="HAMAP-Rule" id="MF_01515"/>
    </source>
</evidence>
<proteinExistence type="inferred from homology"/>
<name>Y3390_BACC1</name>
<dbReference type="EMBL" id="AE017194">
    <property type="protein sequence ID" value="AAS42298.1"/>
    <property type="molecule type" value="Genomic_DNA"/>
</dbReference>
<dbReference type="SMR" id="P61546"/>
<dbReference type="KEGG" id="bca:BCE_3390"/>
<dbReference type="HOGENOM" id="CLU_106166_1_1_9"/>
<dbReference type="Proteomes" id="UP000002527">
    <property type="component" value="Chromosome"/>
</dbReference>
<dbReference type="GO" id="GO:0005886">
    <property type="term" value="C:plasma membrane"/>
    <property type="evidence" value="ECO:0007669"/>
    <property type="project" value="UniProtKB-SubCell"/>
</dbReference>
<dbReference type="CDD" id="cd16381">
    <property type="entry name" value="YitT_C_like_1"/>
    <property type="match status" value="1"/>
</dbReference>
<dbReference type="HAMAP" id="MF_01515">
    <property type="entry name" value="UPF0316"/>
    <property type="match status" value="1"/>
</dbReference>
<dbReference type="InterPro" id="IPR019264">
    <property type="entry name" value="DUF2179"/>
</dbReference>
<dbReference type="InterPro" id="IPR044035">
    <property type="entry name" value="DUF5698"/>
</dbReference>
<dbReference type="InterPro" id="IPR022930">
    <property type="entry name" value="UPF0316"/>
</dbReference>
<dbReference type="NCBIfam" id="NF003193">
    <property type="entry name" value="PRK04164.1-4"/>
    <property type="match status" value="1"/>
</dbReference>
<dbReference type="NCBIfam" id="NF003194">
    <property type="entry name" value="PRK04164.1-5"/>
    <property type="match status" value="1"/>
</dbReference>
<dbReference type="PANTHER" id="PTHR40060">
    <property type="entry name" value="UPF0316 PROTEIN YEBE"/>
    <property type="match status" value="1"/>
</dbReference>
<dbReference type="PANTHER" id="PTHR40060:SF1">
    <property type="entry name" value="UPF0316 PROTEIN YEBE"/>
    <property type="match status" value="1"/>
</dbReference>
<dbReference type="Pfam" id="PF10035">
    <property type="entry name" value="DUF2179"/>
    <property type="match status" value="1"/>
</dbReference>
<dbReference type="Pfam" id="PF18955">
    <property type="entry name" value="DUF5698"/>
    <property type="match status" value="1"/>
</dbReference>